<protein>
    <recommendedName>
        <fullName evidence="5">Probable E3 ubiquitin-protein ligase TRIML2</fullName>
        <ecNumber>2.3.2.27</ecNumber>
    </recommendedName>
    <alternativeName>
        <fullName evidence="5">RING-type E3 ubiquitin transferase TRIML2</fullName>
    </alternativeName>
    <alternativeName>
        <fullName>SPRY domain-containing protein 6</fullName>
    </alternativeName>
    <alternativeName>
        <fullName>Tripartite motif family-like protein 2</fullName>
    </alternativeName>
</protein>
<keyword id="KW-0025">Alternative splicing</keyword>
<keyword id="KW-0175">Coiled coil</keyword>
<keyword id="KW-0479">Metal-binding</keyword>
<keyword id="KW-1267">Proteomics identification</keyword>
<keyword id="KW-1185">Reference proteome</keyword>
<keyword id="KW-0808">Transferase</keyword>
<keyword id="KW-0833">Ubl conjugation pathway</keyword>
<keyword id="KW-0862">Zinc</keyword>
<keyword id="KW-0863">Zinc-finger</keyword>
<gene>
    <name evidence="6" type="primary">TRIML2</name>
    <name type="synonym">SPRYD6</name>
</gene>
<comment type="catalytic activity">
    <reaction>
        <text>S-ubiquitinyl-[E2 ubiquitin-conjugating enzyme]-L-cysteine + [acceptor protein]-L-lysine = [E2 ubiquitin-conjugating enzyme]-L-cysteine + N(6)-ubiquitinyl-[acceptor protein]-L-lysine.</text>
        <dbReference type="EC" id="2.3.2.27"/>
    </reaction>
</comment>
<comment type="pathway">
    <text>Protein modification; protein ubiquitination.</text>
</comment>
<comment type="interaction">
    <interactant intactId="EBI-11059915">
        <id>Q8N7C3</id>
    </interactant>
    <interactant intactId="EBI-11096309">
        <id>Q9NYB9-2</id>
        <label>ABI2</label>
    </interactant>
    <organismsDiffer>false</organismsDiffer>
    <experiments>3</experiments>
</comment>
<comment type="interaction">
    <interactant intactId="EBI-11059915">
        <id>Q8N7C3</id>
    </interactant>
    <interactant intactId="EBI-465872">
        <id>Q6QNY1</id>
        <label>BLOC1S2</label>
    </interactant>
    <organismsDiffer>false</organismsDiffer>
    <experiments>5</experiments>
</comment>
<comment type="interaction">
    <interactant intactId="EBI-11059915">
        <id>Q8N7C3</id>
    </interactant>
    <interactant intactId="EBI-11524851">
        <id>Q8NA61-2</id>
        <label>CBY2</label>
    </interactant>
    <organismsDiffer>false</organismsDiffer>
    <experiments>3</experiments>
</comment>
<comment type="interaction">
    <interactant intactId="EBI-11059915">
        <id>Q8N7C3</id>
    </interactant>
    <interactant intactId="EBI-10749669">
        <id>Q8IYE0</id>
        <label>CCDC146</label>
    </interactant>
    <organismsDiffer>false</organismsDiffer>
    <experiments>3</experiments>
</comment>
<comment type="interaction">
    <interactant intactId="EBI-11059915">
        <id>Q8N7C3</id>
    </interactant>
    <interactant intactId="EBI-719994">
        <id>Q53HC0</id>
        <label>CCDC92</label>
    </interactant>
    <organismsDiffer>false</organismsDiffer>
    <experiments>7</experiments>
</comment>
<comment type="interaction">
    <interactant intactId="EBI-11059915">
        <id>Q8N7C3</id>
    </interactant>
    <interactant intactId="EBI-10175300">
        <id>Q8TD31-3</id>
        <label>CCHCR1</label>
    </interactant>
    <organismsDiffer>false</organismsDiffer>
    <experiments>3</experiments>
</comment>
<comment type="interaction">
    <interactant intactId="EBI-11059915">
        <id>Q8N7C3</id>
    </interactant>
    <interactant intactId="EBI-741406">
        <id>P51946</id>
        <label>CCNH</label>
    </interactant>
    <organismsDiffer>false</organismsDiffer>
    <experiments>3</experiments>
</comment>
<comment type="interaction">
    <interactant intactId="EBI-11059915">
        <id>Q8N7C3</id>
    </interactant>
    <interactant intactId="EBI-1181367">
        <id>Q01850</id>
        <label>CDR2</label>
    </interactant>
    <organismsDiffer>false</organismsDiffer>
    <experiments>3</experiments>
</comment>
<comment type="interaction">
    <interactant intactId="EBI-11059915">
        <id>Q8N7C3</id>
    </interactant>
    <interactant intactId="EBI-10171902">
        <id>P56545-3</id>
        <label>CTBP2</label>
    </interactant>
    <organismsDiffer>false</organismsDiffer>
    <experiments>3</experiments>
</comment>
<comment type="interaction">
    <interactant intactId="EBI-11059915">
        <id>Q8N7C3</id>
    </interactant>
    <interactant intactId="EBI-491065">
        <id>Q14232</id>
        <label>EIF2B1</label>
    </interactant>
    <organismsDiffer>false</organismsDiffer>
    <experiments>3</experiments>
</comment>
<comment type="interaction">
    <interactant intactId="EBI-11059915">
        <id>Q8N7C3</id>
    </interactant>
    <interactant intactId="EBI-353901">
        <id>Q7L2H7</id>
        <label>EIF3M</label>
    </interactant>
    <organismsDiffer>false</organismsDiffer>
    <experiments>3</experiments>
</comment>
<comment type="interaction">
    <interactant intactId="EBI-11059915">
        <id>Q8N7C3</id>
    </interactant>
    <interactant intactId="EBI-6658203">
        <id>Q86YD7</id>
        <label>FAM90A1</label>
    </interactant>
    <organismsDiffer>false</organismsDiffer>
    <experiments>3</experiments>
</comment>
<comment type="interaction">
    <interactant intactId="EBI-11059915">
        <id>Q8N7C3</id>
    </interactant>
    <interactant intactId="EBI-2870039">
        <id>Q8IZT9</id>
        <label>FAM9C</label>
    </interactant>
    <organismsDiffer>false</organismsDiffer>
    <experiments>3</experiments>
</comment>
<comment type="interaction">
    <interactant intactId="EBI-11059915">
        <id>Q8N7C3</id>
    </interactant>
    <interactant intactId="EBI-740220">
        <id>O14964</id>
        <label>HGS</label>
    </interactant>
    <organismsDiffer>false</organismsDiffer>
    <experiments>3</experiments>
</comment>
<comment type="interaction">
    <interactant intactId="EBI-11059915">
        <id>Q8N7C3</id>
    </interactant>
    <interactant intactId="EBI-488533">
        <id>Q8WYH8</id>
        <label>ING5</label>
    </interactant>
    <organismsDiffer>false</organismsDiffer>
    <experiments>3</experiments>
</comment>
<comment type="interaction">
    <interactant intactId="EBI-11059915">
        <id>Q8N7C3</id>
    </interactant>
    <interactant intactId="EBI-712105">
        <id>Q13352</id>
        <label>ITGB3BP</label>
    </interactant>
    <organismsDiffer>false</organismsDiffer>
    <experiments>3</experiments>
</comment>
<comment type="interaction">
    <interactant intactId="EBI-11059915">
        <id>Q8N7C3</id>
    </interactant>
    <interactant intactId="EBI-739566">
        <id>P19012</id>
        <label>KRT15</label>
    </interactant>
    <organismsDiffer>false</organismsDiffer>
    <experiments>3</experiments>
</comment>
<comment type="interaction">
    <interactant intactId="EBI-11059915">
        <id>Q8N7C3</id>
    </interactant>
    <interactant intactId="EBI-2952736">
        <id>Q2M2I5</id>
        <label>KRT24</label>
    </interactant>
    <organismsDiffer>false</organismsDiffer>
    <experiments>3</experiments>
</comment>
<comment type="interaction">
    <interactant intactId="EBI-11059915">
        <id>Q8N7C3</id>
    </interactant>
    <interactant intactId="EBI-3044087">
        <id>Q7Z3Y8</id>
        <label>KRT27</label>
    </interactant>
    <organismsDiffer>false</organismsDiffer>
    <experiments>3</experiments>
</comment>
<comment type="interaction">
    <interactant intactId="EBI-11059915">
        <id>Q8N7C3</id>
    </interactant>
    <interactant intactId="EBI-948001">
        <id>Q15323</id>
        <label>KRT31</label>
    </interactant>
    <organismsDiffer>false</organismsDiffer>
    <experiments>3</experiments>
</comment>
<comment type="interaction">
    <interactant intactId="EBI-11059915">
        <id>Q8N7C3</id>
    </interactant>
    <interactant intactId="EBI-1047093">
        <id>O76011</id>
        <label>KRT34</label>
    </interactant>
    <organismsDiffer>false</organismsDiffer>
    <experiments>3</experiments>
</comment>
<comment type="interaction">
    <interactant intactId="EBI-11059915">
        <id>Q8N7C3</id>
    </interactant>
    <interactant intactId="EBI-1047263">
        <id>O76015</id>
        <label>KRT38</label>
    </interactant>
    <organismsDiffer>false</organismsDiffer>
    <experiments>3</experiments>
</comment>
<comment type="interaction">
    <interactant intactId="EBI-11059915">
        <id>Q8N7C3</id>
    </interactant>
    <interactant intactId="EBI-2949715">
        <id>O95678</id>
        <label>KRT75</label>
    </interactant>
    <organismsDiffer>false</organismsDiffer>
    <experiments>3</experiments>
</comment>
<comment type="interaction">
    <interactant intactId="EBI-11059915">
        <id>Q8N7C3</id>
    </interactant>
    <interactant intactId="EBI-11989378">
        <id>Q8NHZ7</id>
        <label>MBD3L2</label>
    </interactant>
    <organismsDiffer>false</organismsDiffer>
    <experiments>3</experiments>
</comment>
<comment type="interaction">
    <interactant intactId="EBI-11059915">
        <id>Q8N7C3</id>
    </interactant>
    <interactant intactId="EBI-17422057">
        <id>A6NE82</id>
        <label>MBD3L3</label>
    </interactant>
    <organismsDiffer>false</organismsDiffer>
    <experiments>3</experiments>
</comment>
<comment type="interaction">
    <interactant intactId="EBI-11059915">
        <id>Q8N7C3</id>
    </interactant>
    <interactant intactId="EBI-2864512">
        <id>P50221</id>
        <label>MEOX1</label>
    </interactant>
    <organismsDiffer>false</organismsDiffer>
    <experiments>3</experiments>
</comment>
<comment type="interaction">
    <interactant intactId="EBI-11059915">
        <id>Q8N7C3</id>
    </interactant>
    <interactant intactId="EBI-16439278">
        <id>Q6FHY5</id>
        <label>MEOX2</label>
    </interactant>
    <organismsDiffer>false</organismsDiffer>
    <experiments>3</experiments>
</comment>
<comment type="interaction">
    <interactant intactId="EBI-11059915">
        <id>Q8N7C3</id>
    </interactant>
    <interactant intactId="EBI-10172876">
        <id>Q7Z6G3-2</id>
        <label>NECAB2</label>
    </interactant>
    <organismsDiffer>false</organismsDiffer>
    <experiments>4</experiments>
</comment>
<comment type="interaction">
    <interactant intactId="EBI-11059915">
        <id>Q8N7C3</id>
    </interactant>
    <interactant intactId="EBI-10271199">
        <id>Q8NI38</id>
        <label>NFKBID</label>
    </interactant>
    <organismsDiffer>false</organismsDiffer>
    <experiments>3</experiments>
</comment>
<comment type="interaction">
    <interactant intactId="EBI-11059915">
        <id>Q8N7C3</id>
    </interactant>
    <interactant intactId="EBI-347978">
        <id>P37198</id>
        <label>NUP62</label>
    </interactant>
    <organismsDiffer>false</organismsDiffer>
    <experiments>3</experiments>
</comment>
<comment type="interaction">
    <interactant intactId="EBI-11059915">
        <id>Q8N7C3</id>
    </interactant>
    <interactant intactId="EBI-79165">
        <id>Q9NRD5</id>
        <label>PICK1</label>
    </interactant>
    <organismsDiffer>false</organismsDiffer>
    <experiments>3</experiments>
</comment>
<comment type="interaction">
    <interactant intactId="EBI-11059915">
        <id>Q8N7C3</id>
    </interactant>
    <interactant intactId="EBI-355434">
        <id>Q9P1U0</id>
        <label>POLR1H</label>
    </interactant>
    <organismsDiffer>false</organismsDiffer>
    <experiments>3</experiments>
</comment>
<comment type="interaction">
    <interactant intactId="EBI-11059915">
        <id>Q8N7C3</id>
    </interactant>
    <interactant intactId="EBI-12029004">
        <id>P78424</id>
        <label>POU6F2</label>
    </interactant>
    <organismsDiffer>false</organismsDiffer>
    <experiments>3</experiments>
</comment>
<comment type="interaction">
    <interactant intactId="EBI-11059915">
        <id>Q8N7C3</id>
    </interactant>
    <interactant intactId="EBI-747035">
        <id>Q9H788</id>
        <label>SH2D4A</label>
    </interactant>
    <organismsDiffer>false</organismsDiffer>
    <experiments>3</experiments>
</comment>
<comment type="interaction">
    <interactant intactId="EBI-11059915">
        <id>Q8N7C3</id>
    </interactant>
    <interactant intactId="EBI-746930">
        <id>Q9H668</id>
        <label>STN1</label>
    </interactant>
    <organismsDiffer>false</organismsDiffer>
    <experiments>3</experiments>
</comment>
<comment type="interaction">
    <interactant intactId="EBI-11059915">
        <id>Q8N7C3</id>
    </interactant>
    <interactant intactId="EBI-11958386">
        <id>Q6PIF2</id>
        <label>SYCE2</label>
    </interactant>
    <organismsDiffer>false</organismsDiffer>
    <experiments>5</experiments>
</comment>
<comment type="interaction">
    <interactant intactId="EBI-11059915">
        <id>Q8N7C3</id>
    </interactant>
    <interactant intactId="EBI-11899977">
        <id>Q3MII6</id>
        <label>TBC1D25</label>
    </interactant>
    <organismsDiffer>false</organismsDiffer>
    <experiments>3</experiments>
</comment>
<comment type="interaction">
    <interactant intactId="EBI-11059915">
        <id>Q8N7C3</id>
    </interactant>
    <interactant intactId="EBI-13636688">
        <id>P15884-3</id>
        <label>TCF4</label>
    </interactant>
    <organismsDiffer>false</organismsDiffer>
    <experiments>3</experiments>
</comment>
<comment type="interaction">
    <interactant intactId="EBI-11059915">
        <id>Q8N7C3</id>
    </interactant>
    <interactant intactId="EBI-1105213">
        <id>Q9UBB9</id>
        <label>TFIP11</label>
    </interactant>
    <organismsDiffer>false</organismsDiffer>
    <experiments>3</experiments>
</comment>
<comment type="interaction">
    <interactant intactId="EBI-11059915">
        <id>Q8N7C3</id>
    </interactant>
    <interactant intactId="EBI-2130429">
        <id>Q9BYV2</id>
        <label>TRIM54</label>
    </interactant>
    <organismsDiffer>false</organismsDiffer>
    <experiments>3</experiments>
</comment>
<comment type="interaction">
    <interactant intactId="EBI-11059915">
        <id>Q8N7C3</id>
    </interactant>
    <interactant intactId="EBI-11059915">
        <id>Q8N7C3</id>
        <label>TRIML2</label>
    </interactant>
    <organismsDiffer>false</organismsDiffer>
    <experiments>3</experiments>
</comment>
<comment type="interaction">
    <interactant intactId="EBI-11059915">
        <id>Q8N7C3</id>
    </interactant>
    <interactant intactId="EBI-2559824">
        <id>Q7Z6J9</id>
        <label>TSEN54</label>
    </interactant>
    <organismsDiffer>false</organismsDiffer>
    <experiments>3</experiments>
</comment>
<comment type="interaction">
    <interactant intactId="EBI-11059915">
        <id>Q8N7C3</id>
    </interactant>
    <interactant intactId="EBI-346882">
        <id>Q99816</id>
        <label>TSG101</label>
    </interactant>
    <organismsDiffer>false</organismsDiffer>
    <experiments>3</experiments>
</comment>
<comment type="interaction">
    <interactant intactId="EBI-11059915">
        <id>Q8N7C3</id>
    </interactant>
    <interactant intactId="EBI-739895">
        <id>Q8N6Y0</id>
        <label>USHBP1</label>
    </interactant>
    <organismsDiffer>false</organismsDiffer>
    <experiments>3</experiments>
</comment>
<comment type="interaction">
    <interactant intactId="EBI-11059915">
        <id>Q8N7C3</id>
    </interactant>
    <interactant intactId="EBI-2815120">
        <id>Q6GPH4</id>
        <label>XAF1</label>
    </interactant>
    <organismsDiffer>false</organismsDiffer>
    <experiments>3</experiments>
</comment>
<comment type="interaction">
    <interactant intactId="EBI-11059915">
        <id>Q8N7C3</id>
    </interactant>
    <interactant intactId="EBI-740037">
        <id>O96006</id>
        <label>ZBED1</label>
    </interactant>
    <organismsDiffer>false</organismsDiffer>
    <experiments>3</experiments>
</comment>
<comment type="interaction">
    <interactant intactId="EBI-11059915">
        <id>Q8N7C3</id>
    </interactant>
    <interactant intactId="EBI-2515625">
        <id>Q86T24</id>
        <label>ZBTB33</label>
    </interactant>
    <organismsDiffer>false</organismsDiffer>
    <experiments>6</experiments>
</comment>
<comment type="interaction">
    <interactant intactId="EBI-11059915">
        <id>Q8N7C3</id>
    </interactant>
    <interactant intactId="EBI-10237226">
        <id>Q15911-2</id>
        <label>ZFHX3</label>
    </interactant>
    <organismsDiffer>false</organismsDiffer>
    <experiments>3</experiments>
</comment>
<comment type="alternative products">
    <event type="alternative splicing"/>
    <isoform>
        <id>Q8N7C3-1</id>
        <name>1</name>
        <sequence type="displayed"/>
    </isoform>
    <isoform>
        <id>Q8N7C3-2</id>
        <name>2</name>
        <sequence type="described" ref="VSP_055447 VSP_055448"/>
    </isoform>
</comment>
<comment type="sequence caution" evidence="5">
    <conflict type="erroneous initiation">
        <sequence resource="EMBL-CDS" id="AAI11960"/>
    </conflict>
    <text>Truncated N-terminus.</text>
</comment>
<comment type="sequence caution" evidence="5">
    <conflict type="erroneous initiation">
        <sequence resource="EMBL-CDS" id="AAI11962"/>
    </conflict>
    <text>Truncated N-terminus.</text>
</comment>
<comment type="sequence caution" evidence="5">
    <conflict type="erroneous initiation">
        <sequence resource="EMBL-CDS" id="BAC05372"/>
    </conflict>
    <text>Truncated N-terminus.</text>
</comment>
<sequence>MSKRLSPQLQHNITEDAYCETHLEPTRLFCDVDQITLCSKCFQSQEHKHHMVCGIQEAAENYRKLFQEILNTSREKLEAAKSILTDEQERMAMIQEEEQNFKKMIESEYSMRLRLLNEECEQNLQRQQECISDLNLRETLLNQAIKLATELEEMFQEMLQRLGRVGRENMEKLKESEARASEQVRSLLKLIVELEKKCGEGTLALLKNAKYSLERSKSLLLEHLEPAHITDLSLCHIRGLSSMFRVLQRHLTLDPETAHPCLALSEDLRTMRLRHGQQDGAGNPERLDFSAMVLAAESFTSGRHYWEVDVEKATRWQVGIYHGSADAKGSTARASGEKVLLTGSVMGTEWTLWVFPPLKRLFLEKKLDTVGVFLDCEHGQISFYNVTEMSLIYNFSHCAFQGALRPVFSLCIPNGDTSPDSLTILQHGPSCDATVSP</sequence>
<accession>Q8N7C3</accession>
<accession>B7Z6J6</accession>
<name>TRIMM_HUMAN</name>
<organism>
    <name type="scientific">Homo sapiens</name>
    <name type="common">Human</name>
    <dbReference type="NCBI Taxonomy" id="9606"/>
    <lineage>
        <taxon>Eukaryota</taxon>
        <taxon>Metazoa</taxon>
        <taxon>Chordata</taxon>
        <taxon>Craniata</taxon>
        <taxon>Vertebrata</taxon>
        <taxon>Euteleostomi</taxon>
        <taxon>Mammalia</taxon>
        <taxon>Eutheria</taxon>
        <taxon>Euarchontoglires</taxon>
        <taxon>Primates</taxon>
        <taxon>Haplorrhini</taxon>
        <taxon>Catarrhini</taxon>
        <taxon>Hominidae</taxon>
        <taxon>Homo</taxon>
    </lineage>
</organism>
<evidence type="ECO:0000255" key="1"/>
<evidence type="ECO:0000255" key="2">
    <source>
        <dbReference type="PROSITE-ProRule" id="PRU00024"/>
    </source>
</evidence>
<evidence type="ECO:0000255" key="3">
    <source>
        <dbReference type="PROSITE-ProRule" id="PRU00548"/>
    </source>
</evidence>
<evidence type="ECO:0000303" key="4">
    <source>
    </source>
</evidence>
<evidence type="ECO:0000305" key="5"/>
<evidence type="ECO:0000312" key="6">
    <source>
        <dbReference type="HGNC" id="HGNC:26378"/>
    </source>
</evidence>
<reference key="1">
    <citation type="journal article" date="2005" name="Nature">
        <title>Generation and annotation of the DNA sequences of human chromosomes 2 and 4.</title>
        <authorList>
            <person name="Hillier L.W."/>
            <person name="Graves T.A."/>
            <person name="Fulton R.S."/>
            <person name="Fulton L.A."/>
            <person name="Pepin K.H."/>
            <person name="Minx P."/>
            <person name="Wagner-McPherson C."/>
            <person name="Layman D."/>
            <person name="Wylie K."/>
            <person name="Sekhon M."/>
            <person name="Becker M.C."/>
            <person name="Fewell G.A."/>
            <person name="Delehaunty K.D."/>
            <person name="Miner T.L."/>
            <person name="Nash W.E."/>
            <person name="Kremitzki C."/>
            <person name="Oddy L."/>
            <person name="Du H."/>
            <person name="Sun H."/>
            <person name="Bradshaw-Cordum H."/>
            <person name="Ali J."/>
            <person name="Carter J."/>
            <person name="Cordes M."/>
            <person name="Harris A."/>
            <person name="Isak A."/>
            <person name="van Brunt A."/>
            <person name="Nguyen C."/>
            <person name="Du F."/>
            <person name="Courtney L."/>
            <person name="Kalicki J."/>
            <person name="Ozersky P."/>
            <person name="Abbott S."/>
            <person name="Armstrong J."/>
            <person name="Belter E.A."/>
            <person name="Caruso L."/>
            <person name="Cedroni M."/>
            <person name="Cotton M."/>
            <person name="Davidson T."/>
            <person name="Desai A."/>
            <person name="Elliott G."/>
            <person name="Erb T."/>
            <person name="Fronick C."/>
            <person name="Gaige T."/>
            <person name="Haakenson W."/>
            <person name="Haglund K."/>
            <person name="Holmes A."/>
            <person name="Harkins R."/>
            <person name="Kim K."/>
            <person name="Kruchowski S.S."/>
            <person name="Strong C.M."/>
            <person name="Grewal N."/>
            <person name="Goyea E."/>
            <person name="Hou S."/>
            <person name="Levy A."/>
            <person name="Martinka S."/>
            <person name="Mead K."/>
            <person name="McLellan M.D."/>
            <person name="Meyer R."/>
            <person name="Randall-Maher J."/>
            <person name="Tomlinson C."/>
            <person name="Dauphin-Kohlberg S."/>
            <person name="Kozlowicz-Reilly A."/>
            <person name="Shah N."/>
            <person name="Swearengen-Shahid S."/>
            <person name="Snider J."/>
            <person name="Strong J.T."/>
            <person name="Thompson J."/>
            <person name="Yoakum M."/>
            <person name="Leonard S."/>
            <person name="Pearman C."/>
            <person name="Trani L."/>
            <person name="Radionenko M."/>
            <person name="Waligorski J.E."/>
            <person name="Wang C."/>
            <person name="Rock S.M."/>
            <person name="Tin-Wollam A.-M."/>
            <person name="Maupin R."/>
            <person name="Latreille P."/>
            <person name="Wendl M.C."/>
            <person name="Yang S.-P."/>
            <person name="Pohl C."/>
            <person name="Wallis J.W."/>
            <person name="Spieth J."/>
            <person name="Bieri T.A."/>
            <person name="Berkowicz N."/>
            <person name="Nelson J.O."/>
            <person name="Osborne J."/>
            <person name="Ding L."/>
            <person name="Meyer R."/>
            <person name="Sabo A."/>
            <person name="Shotland Y."/>
            <person name="Sinha P."/>
            <person name="Wohldmann P.E."/>
            <person name="Cook L.L."/>
            <person name="Hickenbotham M.T."/>
            <person name="Eldred J."/>
            <person name="Williams D."/>
            <person name="Jones T.A."/>
            <person name="She X."/>
            <person name="Ciccarelli F.D."/>
            <person name="Izaurralde E."/>
            <person name="Taylor J."/>
            <person name="Schmutz J."/>
            <person name="Myers R.M."/>
            <person name="Cox D.R."/>
            <person name="Huang X."/>
            <person name="McPherson J.D."/>
            <person name="Mardis E.R."/>
            <person name="Clifton S.W."/>
            <person name="Warren W.C."/>
            <person name="Chinwalla A.T."/>
            <person name="Eddy S.R."/>
            <person name="Marra M.A."/>
            <person name="Ovcharenko I."/>
            <person name="Furey T.S."/>
            <person name="Miller W."/>
            <person name="Eichler E.E."/>
            <person name="Bork P."/>
            <person name="Suyama M."/>
            <person name="Torrents D."/>
            <person name="Waterston R.H."/>
            <person name="Wilson R.K."/>
        </authorList>
    </citation>
    <scope>NUCLEOTIDE SEQUENCE [LARGE SCALE GENOMIC DNA]</scope>
</reference>
<reference key="2">
    <citation type="journal article" date="2004" name="Nat. Genet.">
        <title>Complete sequencing and characterization of 21,243 full-length human cDNAs.</title>
        <authorList>
            <person name="Ota T."/>
            <person name="Suzuki Y."/>
            <person name="Nishikawa T."/>
            <person name="Otsuki T."/>
            <person name="Sugiyama T."/>
            <person name="Irie R."/>
            <person name="Wakamatsu A."/>
            <person name="Hayashi K."/>
            <person name="Sato H."/>
            <person name="Nagai K."/>
            <person name="Kimura K."/>
            <person name="Makita H."/>
            <person name="Sekine M."/>
            <person name="Obayashi M."/>
            <person name="Nishi T."/>
            <person name="Shibahara T."/>
            <person name="Tanaka T."/>
            <person name="Ishii S."/>
            <person name="Yamamoto J."/>
            <person name="Saito K."/>
            <person name="Kawai Y."/>
            <person name="Isono Y."/>
            <person name="Nakamura Y."/>
            <person name="Nagahari K."/>
            <person name="Murakami K."/>
            <person name="Yasuda T."/>
            <person name="Iwayanagi T."/>
            <person name="Wagatsuma M."/>
            <person name="Shiratori A."/>
            <person name="Sudo H."/>
            <person name="Hosoiri T."/>
            <person name="Kaku Y."/>
            <person name="Kodaira H."/>
            <person name="Kondo H."/>
            <person name="Sugawara M."/>
            <person name="Takahashi M."/>
            <person name="Kanda K."/>
            <person name="Yokoi T."/>
            <person name="Furuya T."/>
            <person name="Kikkawa E."/>
            <person name="Omura Y."/>
            <person name="Abe K."/>
            <person name="Kamihara K."/>
            <person name="Katsuta N."/>
            <person name="Sato K."/>
            <person name="Tanikawa M."/>
            <person name="Yamazaki M."/>
            <person name="Ninomiya K."/>
            <person name="Ishibashi T."/>
            <person name="Yamashita H."/>
            <person name="Murakawa K."/>
            <person name="Fujimori K."/>
            <person name="Tanai H."/>
            <person name="Kimata M."/>
            <person name="Watanabe M."/>
            <person name="Hiraoka S."/>
            <person name="Chiba Y."/>
            <person name="Ishida S."/>
            <person name="Ono Y."/>
            <person name="Takiguchi S."/>
            <person name="Watanabe S."/>
            <person name="Yosida M."/>
            <person name="Hotuta T."/>
            <person name="Kusano J."/>
            <person name="Kanehori K."/>
            <person name="Takahashi-Fujii A."/>
            <person name="Hara H."/>
            <person name="Tanase T.-O."/>
            <person name="Nomura Y."/>
            <person name="Togiya S."/>
            <person name="Komai F."/>
            <person name="Hara R."/>
            <person name="Takeuchi K."/>
            <person name="Arita M."/>
            <person name="Imose N."/>
            <person name="Musashino K."/>
            <person name="Yuuki H."/>
            <person name="Oshima A."/>
            <person name="Sasaki N."/>
            <person name="Aotsuka S."/>
            <person name="Yoshikawa Y."/>
            <person name="Matsunawa H."/>
            <person name="Ichihara T."/>
            <person name="Shiohata N."/>
            <person name="Sano S."/>
            <person name="Moriya S."/>
            <person name="Momiyama H."/>
            <person name="Satoh N."/>
            <person name="Takami S."/>
            <person name="Terashima Y."/>
            <person name="Suzuki O."/>
            <person name="Nakagawa S."/>
            <person name="Senoh A."/>
            <person name="Mizoguchi H."/>
            <person name="Goto Y."/>
            <person name="Shimizu F."/>
            <person name="Wakebe H."/>
            <person name="Hishigaki H."/>
            <person name="Watanabe T."/>
            <person name="Sugiyama A."/>
            <person name="Takemoto M."/>
            <person name="Kawakami B."/>
            <person name="Yamazaki M."/>
            <person name="Watanabe K."/>
            <person name="Kumagai A."/>
            <person name="Itakura S."/>
            <person name="Fukuzumi Y."/>
            <person name="Fujimori Y."/>
            <person name="Komiyama M."/>
            <person name="Tashiro H."/>
            <person name="Tanigami A."/>
            <person name="Fujiwara T."/>
            <person name="Ono T."/>
            <person name="Yamada K."/>
            <person name="Fujii Y."/>
            <person name="Ozaki K."/>
            <person name="Hirao M."/>
            <person name="Ohmori Y."/>
            <person name="Kawabata A."/>
            <person name="Hikiji T."/>
            <person name="Kobatake N."/>
            <person name="Inagaki H."/>
            <person name="Ikema Y."/>
            <person name="Okamoto S."/>
            <person name="Okitani R."/>
            <person name="Kawakami T."/>
            <person name="Noguchi S."/>
            <person name="Itoh T."/>
            <person name="Shigeta K."/>
            <person name="Senba T."/>
            <person name="Matsumura K."/>
            <person name="Nakajima Y."/>
            <person name="Mizuno T."/>
            <person name="Morinaga M."/>
            <person name="Sasaki M."/>
            <person name="Togashi T."/>
            <person name="Oyama M."/>
            <person name="Hata H."/>
            <person name="Watanabe M."/>
            <person name="Komatsu T."/>
            <person name="Mizushima-Sugano J."/>
            <person name="Satoh T."/>
            <person name="Shirai Y."/>
            <person name="Takahashi Y."/>
            <person name="Nakagawa K."/>
            <person name="Okumura K."/>
            <person name="Nagase T."/>
            <person name="Nomura N."/>
            <person name="Kikuchi H."/>
            <person name="Masuho Y."/>
            <person name="Yamashita R."/>
            <person name="Nakai K."/>
            <person name="Yada T."/>
            <person name="Nakamura Y."/>
            <person name="Ohara O."/>
            <person name="Isogai T."/>
            <person name="Sugano S."/>
        </authorList>
    </citation>
    <scope>NUCLEOTIDE SEQUENCE [LARGE SCALE MRNA] OF 39-437 (ISOFORM 1)</scope>
    <scope>NUCLEOTIDE SEQUENCE [LARGE SCALE MRNA] (ISOFORM 2)</scope>
    <source>
        <tissue>Placenta</tissue>
        <tissue>Testis</tissue>
    </source>
</reference>
<reference key="3">
    <citation type="journal article" date="2004" name="Genome Res.">
        <title>The status, quality, and expansion of the NIH full-length cDNA project: the Mammalian Gene Collection (MGC).</title>
        <authorList>
            <consortium name="The MGC Project Team"/>
        </authorList>
    </citation>
    <scope>NUCLEOTIDE SEQUENCE [LARGE SCALE MRNA] OF 41-437 (ISOFORM 1)</scope>
    <source>
        <tissue>Brain</tissue>
    </source>
</reference>
<proteinExistence type="evidence at protein level"/>
<dbReference type="EC" id="2.3.2.27"/>
<dbReference type="EMBL" id="AC108073">
    <property type="status" value="NOT_ANNOTATED_CDS"/>
    <property type="molecule type" value="Genomic_DNA"/>
</dbReference>
<dbReference type="EMBL" id="AK098667">
    <property type="protein sequence ID" value="BAC05372.1"/>
    <property type="status" value="ALT_INIT"/>
    <property type="molecule type" value="mRNA"/>
</dbReference>
<dbReference type="EMBL" id="AK300428">
    <property type="protein sequence ID" value="BAH13282.1"/>
    <property type="molecule type" value="mRNA"/>
</dbReference>
<dbReference type="EMBL" id="BC111959">
    <property type="protein sequence ID" value="AAI11960.1"/>
    <property type="status" value="ALT_INIT"/>
    <property type="molecule type" value="mRNA"/>
</dbReference>
<dbReference type="EMBL" id="BC111961">
    <property type="protein sequence ID" value="AAI11962.1"/>
    <property type="status" value="ALT_INIT"/>
    <property type="molecule type" value="mRNA"/>
</dbReference>
<dbReference type="CCDS" id="CCDS3850.2">
    <molecule id="Q8N7C3-1"/>
</dbReference>
<dbReference type="RefSeq" id="NP_001290348.1">
    <property type="nucleotide sequence ID" value="NM_001303419.1"/>
</dbReference>
<dbReference type="RefSeq" id="NP_775824.2">
    <molecule id="Q8N7C3-1"/>
    <property type="nucleotide sequence ID" value="NM_173553.4"/>
</dbReference>
<dbReference type="RefSeq" id="XP_011530039.1">
    <molecule id="Q8N7C3-1"/>
    <property type="nucleotide sequence ID" value="XM_011531737.3"/>
</dbReference>
<dbReference type="RefSeq" id="XP_011530040.1">
    <molecule id="Q8N7C3-1"/>
    <property type="nucleotide sequence ID" value="XM_011531738.3"/>
</dbReference>
<dbReference type="RefSeq" id="XP_016863371.1">
    <property type="nucleotide sequence ID" value="XM_017007882.1"/>
</dbReference>
<dbReference type="RefSeq" id="XP_054205167.1">
    <molecule id="Q8N7C3-1"/>
    <property type="nucleotide sequence ID" value="XM_054349192.1"/>
</dbReference>
<dbReference type="RefSeq" id="XP_054205168.1">
    <molecule id="Q8N7C3-1"/>
    <property type="nucleotide sequence ID" value="XM_054349193.1"/>
</dbReference>
<dbReference type="SMR" id="Q8N7C3"/>
<dbReference type="BioGRID" id="128500">
    <property type="interactions" value="88"/>
</dbReference>
<dbReference type="FunCoup" id="Q8N7C3">
    <property type="interactions" value="211"/>
</dbReference>
<dbReference type="IntAct" id="Q8N7C3">
    <property type="interactions" value="59"/>
</dbReference>
<dbReference type="STRING" id="9606.ENSP00000422581"/>
<dbReference type="GlyGen" id="Q8N7C3">
    <property type="glycosylation" value="1 site, 1 O-linked glycan (1 site)"/>
</dbReference>
<dbReference type="iPTMnet" id="Q8N7C3"/>
<dbReference type="PhosphoSitePlus" id="Q8N7C3"/>
<dbReference type="BioMuta" id="TRIML2"/>
<dbReference type="DMDM" id="74714998"/>
<dbReference type="jPOST" id="Q8N7C3"/>
<dbReference type="MassIVE" id="Q8N7C3"/>
<dbReference type="PaxDb" id="9606-ENSP00000422581"/>
<dbReference type="PeptideAtlas" id="Q8N7C3"/>
<dbReference type="ProteomicsDB" id="6780"/>
<dbReference type="ProteomicsDB" id="72286">
    <molecule id="Q8N7C3-1"/>
</dbReference>
<dbReference type="Pumba" id="Q8N7C3"/>
<dbReference type="Antibodypedia" id="49227">
    <property type="antibodies" value="47 antibodies from 13 providers"/>
</dbReference>
<dbReference type="DNASU" id="205860"/>
<dbReference type="Ensembl" id="ENST00000512729.5">
    <molecule id="Q8N7C3-1"/>
    <property type="protein sequence ID" value="ENSP00000422581.2"/>
    <property type="gene ID" value="ENSG00000179046.9"/>
</dbReference>
<dbReference type="Ensembl" id="ENST00000682553.1">
    <molecule id="Q8N7C3-1"/>
    <property type="protein sequence ID" value="ENSP00000507413.1"/>
    <property type="gene ID" value="ENSG00000179046.9"/>
</dbReference>
<dbReference type="GeneID" id="205860"/>
<dbReference type="KEGG" id="hsa:205860"/>
<dbReference type="MANE-Select" id="ENST00000682553.1">
    <property type="protein sequence ID" value="ENSP00000507413.1"/>
    <property type="RefSeq nucleotide sequence ID" value="NM_173553.4"/>
    <property type="RefSeq protein sequence ID" value="NP_775824.2"/>
</dbReference>
<dbReference type="UCSC" id="uc003izl.3">
    <molecule id="Q8N7C3-1"/>
    <property type="organism name" value="human"/>
</dbReference>
<dbReference type="AGR" id="HGNC:26378"/>
<dbReference type="CTD" id="205860"/>
<dbReference type="DisGeNET" id="205860"/>
<dbReference type="GeneCards" id="TRIML2"/>
<dbReference type="HGNC" id="HGNC:26378">
    <property type="gene designation" value="TRIML2"/>
</dbReference>
<dbReference type="HPA" id="ENSG00000179046">
    <property type="expression patterns" value="Group enriched (placenta, testis)"/>
</dbReference>
<dbReference type="MIM" id="620480">
    <property type="type" value="gene"/>
</dbReference>
<dbReference type="neXtProt" id="NX_Q8N7C3"/>
<dbReference type="OpenTargets" id="ENSG00000179046"/>
<dbReference type="PharmGKB" id="PA162407031"/>
<dbReference type="VEuPathDB" id="HostDB:ENSG00000179046"/>
<dbReference type="eggNOG" id="KOG2177">
    <property type="taxonomic scope" value="Eukaryota"/>
</dbReference>
<dbReference type="GeneTree" id="ENSGT00940000162029"/>
<dbReference type="InParanoid" id="Q8N7C3"/>
<dbReference type="OMA" id="EKKCGED"/>
<dbReference type="OrthoDB" id="9830878at2759"/>
<dbReference type="PAN-GO" id="Q8N7C3">
    <property type="GO annotations" value="13 GO annotations based on evolutionary models"/>
</dbReference>
<dbReference type="PhylomeDB" id="Q8N7C3"/>
<dbReference type="TreeFam" id="TF338674"/>
<dbReference type="PathwayCommons" id="Q8N7C3"/>
<dbReference type="SignaLink" id="Q8N7C3"/>
<dbReference type="UniPathway" id="UPA00143"/>
<dbReference type="BioGRID-ORCS" id="205860">
    <property type="hits" value="10 hits in 1178 CRISPR screens"/>
</dbReference>
<dbReference type="GenomeRNAi" id="205860"/>
<dbReference type="Pharos" id="Q8N7C3">
    <property type="development level" value="Tdark"/>
</dbReference>
<dbReference type="PRO" id="PR:Q8N7C3"/>
<dbReference type="Proteomes" id="UP000005640">
    <property type="component" value="Chromosome 4"/>
</dbReference>
<dbReference type="RNAct" id="Q8N7C3">
    <property type="molecule type" value="protein"/>
</dbReference>
<dbReference type="Bgee" id="ENSG00000179046">
    <property type="expression patterns" value="Expressed in male germ line stem cell (sensu Vertebrata) in testis and 88 other cell types or tissues"/>
</dbReference>
<dbReference type="ExpressionAtlas" id="Q8N7C3">
    <property type="expression patterns" value="baseline and differential"/>
</dbReference>
<dbReference type="GO" id="GO:0005737">
    <property type="term" value="C:cytoplasm"/>
    <property type="evidence" value="ECO:0000318"/>
    <property type="project" value="GO_Central"/>
</dbReference>
<dbReference type="GO" id="GO:0042802">
    <property type="term" value="F:identical protein binding"/>
    <property type="evidence" value="ECO:0000353"/>
    <property type="project" value="IntAct"/>
</dbReference>
<dbReference type="GO" id="GO:0061630">
    <property type="term" value="F:ubiquitin protein ligase activity"/>
    <property type="evidence" value="ECO:0000318"/>
    <property type="project" value="GO_Central"/>
</dbReference>
<dbReference type="GO" id="GO:0008270">
    <property type="term" value="F:zinc ion binding"/>
    <property type="evidence" value="ECO:0007669"/>
    <property type="project" value="UniProtKB-KW"/>
</dbReference>
<dbReference type="GO" id="GO:0045087">
    <property type="term" value="P:innate immune response"/>
    <property type="evidence" value="ECO:0000318"/>
    <property type="project" value="GO_Central"/>
</dbReference>
<dbReference type="GO" id="GO:0016567">
    <property type="term" value="P:protein ubiquitination"/>
    <property type="evidence" value="ECO:0007669"/>
    <property type="project" value="UniProtKB-UniPathway"/>
</dbReference>
<dbReference type="GO" id="GO:0032526">
    <property type="term" value="P:response to retinoic acid"/>
    <property type="evidence" value="ECO:0007669"/>
    <property type="project" value="Ensembl"/>
</dbReference>
<dbReference type="CDD" id="cd13733">
    <property type="entry name" value="SPRY_PRY_C-I_1"/>
    <property type="match status" value="1"/>
</dbReference>
<dbReference type="FunFam" id="2.60.120.920:FF:000004">
    <property type="entry name" value="Butyrophilin subfamily 1 member A1"/>
    <property type="match status" value="1"/>
</dbReference>
<dbReference type="Gene3D" id="2.60.120.920">
    <property type="match status" value="1"/>
</dbReference>
<dbReference type="Gene3D" id="3.30.160.60">
    <property type="entry name" value="Classic Zinc Finger"/>
    <property type="match status" value="1"/>
</dbReference>
<dbReference type="InterPro" id="IPR001870">
    <property type="entry name" value="B30.2/SPRY"/>
</dbReference>
<dbReference type="InterPro" id="IPR043136">
    <property type="entry name" value="B30.2/SPRY_sf"/>
</dbReference>
<dbReference type="InterPro" id="IPR003879">
    <property type="entry name" value="Butyrophylin_SPRY"/>
</dbReference>
<dbReference type="InterPro" id="IPR013320">
    <property type="entry name" value="ConA-like_dom_sf"/>
</dbReference>
<dbReference type="InterPro" id="IPR006574">
    <property type="entry name" value="PRY"/>
</dbReference>
<dbReference type="InterPro" id="IPR003877">
    <property type="entry name" value="SPRY_dom"/>
</dbReference>
<dbReference type="InterPro" id="IPR050143">
    <property type="entry name" value="TRIM/RBCC"/>
</dbReference>
<dbReference type="InterPro" id="IPR000315">
    <property type="entry name" value="Znf_B-box"/>
</dbReference>
<dbReference type="PANTHER" id="PTHR24103">
    <property type="entry name" value="E3 UBIQUITIN-PROTEIN LIGASE TRIM"/>
    <property type="match status" value="1"/>
</dbReference>
<dbReference type="Pfam" id="PF13765">
    <property type="entry name" value="PRY"/>
    <property type="match status" value="1"/>
</dbReference>
<dbReference type="Pfam" id="PF00622">
    <property type="entry name" value="SPRY"/>
    <property type="match status" value="1"/>
</dbReference>
<dbReference type="Pfam" id="PF00643">
    <property type="entry name" value="zf-B_box"/>
    <property type="match status" value="1"/>
</dbReference>
<dbReference type="PRINTS" id="PR01407">
    <property type="entry name" value="BUTYPHLNCDUF"/>
</dbReference>
<dbReference type="SMART" id="SM00589">
    <property type="entry name" value="PRY"/>
    <property type="match status" value="1"/>
</dbReference>
<dbReference type="SMART" id="SM00449">
    <property type="entry name" value="SPRY"/>
    <property type="match status" value="1"/>
</dbReference>
<dbReference type="SUPFAM" id="SSF57845">
    <property type="entry name" value="B-box zinc-binding domain"/>
    <property type="match status" value="1"/>
</dbReference>
<dbReference type="SUPFAM" id="SSF49899">
    <property type="entry name" value="Concanavalin A-like lectins/glucanases"/>
    <property type="match status" value="1"/>
</dbReference>
<dbReference type="PROSITE" id="PS50188">
    <property type="entry name" value="B302_SPRY"/>
    <property type="match status" value="1"/>
</dbReference>
<dbReference type="PROSITE" id="PS50119">
    <property type="entry name" value="ZF_BBOX"/>
    <property type="match status" value="1"/>
</dbReference>
<feature type="chain" id="PRO_0000317435" description="Probable E3 ubiquitin-protein ligase TRIML2">
    <location>
        <begin position="1"/>
        <end position="437"/>
    </location>
</feature>
<feature type="domain" description="B30.2/SPRY" evidence="3">
    <location>
        <begin position="231"/>
        <end position="429"/>
    </location>
</feature>
<feature type="zinc finger region" description="B box-type" evidence="2">
    <location>
        <begin position="14"/>
        <end position="55"/>
    </location>
</feature>
<feature type="coiled-coil region" evidence="1">
    <location>
        <begin position="55"/>
        <end position="200"/>
    </location>
</feature>
<feature type="binding site" evidence="2">
    <location>
        <position position="19"/>
    </location>
    <ligand>
        <name>Zn(2+)</name>
        <dbReference type="ChEBI" id="CHEBI:29105"/>
    </ligand>
</feature>
<feature type="binding site" evidence="2">
    <location>
        <position position="22"/>
    </location>
    <ligand>
        <name>Zn(2+)</name>
        <dbReference type="ChEBI" id="CHEBI:29105"/>
    </ligand>
</feature>
<feature type="binding site" evidence="2">
    <location>
        <position position="41"/>
    </location>
    <ligand>
        <name>Zn(2+)</name>
        <dbReference type="ChEBI" id="CHEBI:29105"/>
    </ligand>
</feature>
<feature type="binding site" evidence="2">
    <location>
        <position position="47"/>
    </location>
    <ligand>
        <name>Zn(2+)</name>
        <dbReference type="ChEBI" id="CHEBI:29105"/>
    </ligand>
</feature>
<feature type="splice variant" id="VSP_055447" description="In isoform 2." evidence="4">
    <original>NAKYSLERSKSLLL</original>
    <variation>VRCWEKENKIHSSI</variation>
    <location>
        <begin position="208"/>
        <end position="221"/>
    </location>
</feature>
<feature type="splice variant" id="VSP_055448" description="In isoform 2." evidence="4">
    <location>
        <begin position="222"/>
        <end position="437"/>
    </location>
</feature>